<organism>
    <name type="scientific">Pseudoalteromonas translucida (strain TAC 125)</name>
    <dbReference type="NCBI Taxonomy" id="326442"/>
    <lineage>
        <taxon>Bacteria</taxon>
        <taxon>Pseudomonadati</taxon>
        <taxon>Pseudomonadota</taxon>
        <taxon>Gammaproteobacteria</taxon>
        <taxon>Alteromonadales</taxon>
        <taxon>Pseudoalteromonadaceae</taxon>
        <taxon>Pseudoalteromonas</taxon>
    </lineage>
</organism>
<feature type="chain" id="PRO_0000319442" description="Thiosulfate sulfurtransferase GlpE">
    <location>
        <begin position="1"/>
        <end position="105"/>
    </location>
</feature>
<feature type="domain" description="Rhodanese" evidence="1">
    <location>
        <begin position="16"/>
        <end position="104"/>
    </location>
</feature>
<feature type="active site" description="Cysteine persulfide intermediate" evidence="1">
    <location>
        <position position="64"/>
    </location>
</feature>
<gene>
    <name evidence="1" type="primary">glpE</name>
    <name type="ordered locus">PSHAa2314</name>
</gene>
<protein>
    <recommendedName>
        <fullName evidence="1">Thiosulfate sulfurtransferase GlpE</fullName>
        <ecNumber evidence="1">2.8.1.1</ecNumber>
    </recommendedName>
</protein>
<name>GLPE_PSET1</name>
<proteinExistence type="inferred from homology"/>
<keyword id="KW-0963">Cytoplasm</keyword>
<keyword id="KW-1185">Reference proteome</keyword>
<keyword id="KW-0808">Transferase</keyword>
<reference key="1">
    <citation type="journal article" date="2005" name="Genome Res.">
        <title>Coping with cold: the genome of the versatile marine Antarctica bacterium Pseudoalteromonas haloplanktis TAC125.</title>
        <authorList>
            <person name="Medigue C."/>
            <person name="Krin E."/>
            <person name="Pascal G."/>
            <person name="Barbe V."/>
            <person name="Bernsel A."/>
            <person name="Bertin P.N."/>
            <person name="Cheung F."/>
            <person name="Cruveiller S."/>
            <person name="D'Amico S."/>
            <person name="Duilio A."/>
            <person name="Fang G."/>
            <person name="Feller G."/>
            <person name="Ho C."/>
            <person name="Mangenot S."/>
            <person name="Marino G."/>
            <person name="Nilsson J."/>
            <person name="Parrilli E."/>
            <person name="Rocha E.P.C."/>
            <person name="Rouy Z."/>
            <person name="Sekowska A."/>
            <person name="Tutino M.L."/>
            <person name="Vallenet D."/>
            <person name="von Heijne G."/>
            <person name="Danchin A."/>
        </authorList>
    </citation>
    <scope>NUCLEOTIDE SEQUENCE [LARGE SCALE GENOMIC DNA]</scope>
    <source>
        <strain>TAC 125</strain>
    </source>
</reference>
<evidence type="ECO:0000255" key="1">
    <source>
        <dbReference type="HAMAP-Rule" id="MF_01009"/>
    </source>
</evidence>
<accession>Q3IHW1</accession>
<comment type="function">
    <text evidence="1">Transferase that catalyzes the transfer of sulfur from thiosulfate to thiophilic acceptors such as cyanide or dithiols. May function in a CysM-independent thiosulfate assimilation pathway by catalyzing the conversion of thiosulfate to sulfite, which can then be used for L-cysteine biosynthesis.</text>
</comment>
<comment type="catalytic activity">
    <reaction evidence="1">
        <text>thiosulfate + hydrogen cyanide = thiocyanate + sulfite + 2 H(+)</text>
        <dbReference type="Rhea" id="RHEA:16881"/>
        <dbReference type="ChEBI" id="CHEBI:15378"/>
        <dbReference type="ChEBI" id="CHEBI:17359"/>
        <dbReference type="ChEBI" id="CHEBI:18022"/>
        <dbReference type="ChEBI" id="CHEBI:18407"/>
        <dbReference type="ChEBI" id="CHEBI:33542"/>
        <dbReference type="EC" id="2.8.1.1"/>
    </reaction>
</comment>
<comment type="catalytic activity">
    <reaction evidence="1">
        <text>thiosulfate + [thioredoxin]-dithiol = [thioredoxin]-disulfide + hydrogen sulfide + sulfite + 2 H(+)</text>
        <dbReference type="Rhea" id="RHEA:83859"/>
        <dbReference type="Rhea" id="RHEA-COMP:10698"/>
        <dbReference type="Rhea" id="RHEA-COMP:10700"/>
        <dbReference type="ChEBI" id="CHEBI:15378"/>
        <dbReference type="ChEBI" id="CHEBI:17359"/>
        <dbReference type="ChEBI" id="CHEBI:29919"/>
        <dbReference type="ChEBI" id="CHEBI:29950"/>
        <dbReference type="ChEBI" id="CHEBI:33542"/>
        <dbReference type="ChEBI" id="CHEBI:50058"/>
    </reaction>
</comment>
<comment type="subcellular location">
    <subcellularLocation>
        <location evidence="1">Cytoplasm</location>
    </subcellularLocation>
</comment>
<comment type="similarity">
    <text evidence="1">Belongs to the GlpE family.</text>
</comment>
<dbReference type="EC" id="2.8.1.1" evidence="1"/>
<dbReference type="EMBL" id="CR954246">
    <property type="protein sequence ID" value="CAI87370.1"/>
    <property type="molecule type" value="Genomic_DNA"/>
</dbReference>
<dbReference type="SMR" id="Q3IHW1"/>
<dbReference type="STRING" id="326442.PSHAa2314"/>
<dbReference type="KEGG" id="pha:PSHAa2314"/>
<dbReference type="PATRIC" id="fig|326442.8.peg.2235"/>
<dbReference type="eggNOG" id="COG0607">
    <property type="taxonomic scope" value="Bacteria"/>
</dbReference>
<dbReference type="HOGENOM" id="CLU_089574_14_0_6"/>
<dbReference type="BioCyc" id="PHAL326442:PSHA_RS11415-MONOMER"/>
<dbReference type="Proteomes" id="UP000006843">
    <property type="component" value="Chromosome I"/>
</dbReference>
<dbReference type="GO" id="GO:0005737">
    <property type="term" value="C:cytoplasm"/>
    <property type="evidence" value="ECO:0007669"/>
    <property type="project" value="UniProtKB-SubCell"/>
</dbReference>
<dbReference type="GO" id="GO:0004792">
    <property type="term" value="F:thiosulfate-cyanide sulfurtransferase activity"/>
    <property type="evidence" value="ECO:0007669"/>
    <property type="project" value="UniProtKB-UniRule"/>
</dbReference>
<dbReference type="GO" id="GO:0006071">
    <property type="term" value="P:glycerol metabolic process"/>
    <property type="evidence" value="ECO:0007669"/>
    <property type="project" value="UniProtKB-UniRule"/>
</dbReference>
<dbReference type="CDD" id="cd01444">
    <property type="entry name" value="GlpE_ST"/>
    <property type="match status" value="1"/>
</dbReference>
<dbReference type="Gene3D" id="3.40.250.10">
    <property type="entry name" value="Rhodanese-like domain"/>
    <property type="match status" value="1"/>
</dbReference>
<dbReference type="HAMAP" id="MF_01009">
    <property type="entry name" value="Thiosulf_sulfurtr"/>
    <property type="match status" value="1"/>
</dbReference>
<dbReference type="InterPro" id="IPR050229">
    <property type="entry name" value="GlpE_sulfurtransferase"/>
</dbReference>
<dbReference type="InterPro" id="IPR001763">
    <property type="entry name" value="Rhodanese-like_dom"/>
</dbReference>
<dbReference type="InterPro" id="IPR036873">
    <property type="entry name" value="Rhodanese-like_dom_sf"/>
</dbReference>
<dbReference type="InterPro" id="IPR023695">
    <property type="entry name" value="Thiosulf_sulfurTrfase"/>
</dbReference>
<dbReference type="NCBIfam" id="NF001195">
    <property type="entry name" value="PRK00162.1"/>
    <property type="match status" value="1"/>
</dbReference>
<dbReference type="PANTHER" id="PTHR43031">
    <property type="entry name" value="FAD-DEPENDENT OXIDOREDUCTASE"/>
    <property type="match status" value="1"/>
</dbReference>
<dbReference type="PANTHER" id="PTHR43031:SF6">
    <property type="entry name" value="THIOSULFATE SULFURTRANSFERASE GLPE"/>
    <property type="match status" value="1"/>
</dbReference>
<dbReference type="Pfam" id="PF00581">
    <property type="entry name" value="Rhodanese"/>
    <property type="match status" value="1"/>
</dbReference>
<dbReference type="SMART" id="SM00450">
    <property type="entry name" value="RHOD"/>
    <property type="match status" value="1"/>
</dbReference>
<dbReference type="SUPFAM" id="SSF52821">
    <property type="entry name" value="Rhodanese/Cell cycle control phosphatase"/>
    <property type="match status" value="1"/>
</dbReference>
<dbReference type="PROSITE" id="PS50206">
    <property type="entry name" value="RHODANESE_3"/>
    <property type="match status" value="1"/>
</dbReference>
<sequence>MAFKHISIAQTLELLDKEDVVIADIRDPNSYQAGHIPGSEALSNANIAHFMMEKEFDQPIIIVCYHGMSSQGAASYLVEQGFEDVYSMDGGFTAWEAAYSEKVER</sequence>